<reference key="1">
    <citation type="journal article" date="1986" name="Gene">
        <title>Nucleotide sequence and molecular evolution of two tomato genes encoding the small subunit of ribulose-1,5-bisphosphate carboxylase.</title>
        <authorList>
            <person name="McKnight T.D."/>
            <person name="Alexander D.C."/>
            <person name="Babcock M.S."/>
            <person name="Simpson R.B."/>
        </authorList>
    </citation>
    <scope>NUCLEOTIDE SEQUENCE [MRNA] (LESS 5)</scope>
    <source>
        <strain>cv. VF36</strain>
    </source>
</reference>
<reference key="2">
    <citation type="journal article" date="1986" name="Proc. Natl. Acad. Sci. U.S.A.">
        <title>Evidence for selection as a mechanism in the concerted evolution of Lycopersicon esculentum (tomato) genes encoding the small subunit of ribulose-1,5-bisphosphate carboxylase/oxygenase.</title>
        <authorList>
            <person name="Pichersky E."/>
            <person name="Bernatzky R."/>
            <person name="Tanksley S.D."/>
            <person name="Cashmore A.R."/>
        </authorList>
    </citation>
    <scope>NUCLEOTIDE SEQUENCE [MRNA] (RBCS-2A)</scope>
</reference>
<reference key="3">
    <citation type="journal article" date="1987" name="Mol. Gen. Genet.">
        <title>Genomic organization, sequence analysis and expression of all five genes encoding the small subunit of ribulose-1,5-bisphosphate carboxylase/oxygenase from tomato.</title>
        <authorList>
            <person name="Sugita M."/>
            <person name="Manzara T."/>
            <person name="Pichersky E."/>
            <person name="Cashmore A."/>
            <person name="Gruissem W."/>
        </authorList>
    </citation>
    <scope>NUCLEOTIDE SEQUENCE (RBCS-2)</scope>
    <source>
        <strain>cv. VFNT Cherry LA1221</strain>
    </source>
</reference>
<reference key="4">
    <citation type="submission" date="1989-08" db="EMBL/GenBank/DDBJ databases">
        <authorList>
            <person name="Manzara T."/>
        </authorList>
    </citation>
    <scope>SEQUENCE REVISION</scope>
</reference>
<reference key="5">
    <citation type="journal article" date="1993" name="Plant Mol. Biol.">
        <title>Developmental and organ-specific changes in DNA-protein interactions in the tomato rbcS1, rbcS2 and rbcS3A promoter regions.</title>
        <authorList>
            <person name="Manzara T."/>
            <person name="Carrasco P."/>
            <person name="Gruissem W."/>
        </authorList>
    </citation>
    <scope>NUCLEOTIDE SEQUENCE OF 1-9 (RBCS-2)</scope>
    <source>
        <strain>cv. VFNT Cherry LA1221</strain>
        <tissue>Root</tissue>
    </source>
</reference>
<feature type="transit peptide" description="Chloroplast" evidence="2">
    <location>
        <begin position="1"/>
        <end position="56"/>
    </location>
</feature>
<feature type="chain" id="PRO_0000031519" description="Ribulose bisphosphate carboxylase small subunit, chloroplastic 2" evidence="2">
    <location>
        <begin position="57"/>
        <end position="180"/>
    </location>
</feature>
<feature type="sequence variant" description="In strain: cv. VF36.">
    <original>I</original>
    <variation>V</variation>
    <location>
        <position position="87"/>
    </location>
</feature>
<comment type="function">
    <text evidence="1 2">RuBisCO catalyzes two reactions: the carboxylation of D-ribulose 1,5-bisphosphate, the primary event in carbon dioxide fixation, as well as the oxidative fragmentation of the pentose substrate. Both reactions occur simultaneously and in competition at the same active site. Although the small subunit is not catalytic it is essential for maximal activity. Involved in antiviral defenses (By similarity).</text>
</comment>
<comment type="subunit">
    <text evidence="2">Heterohexadecamer of 8 large and 8 small subunits.</text>
</comment>
<comment type="subunit">
    <text evidence="5">(Microbial infection) Binds to tobamovirus movement protein; this interaction seems required for viral systemic movement.</text>
</comment>
<comment type="subcellular location">
    <subcellularLocation>
        <location evidence="2">Plastid</location>
        <location evidence="2">Chloroplast</location>
    </subcellularLocation>
</comment>
<comment type="subcellular location">
    <subcellularLocation>
        <location evidence="1">Cell junction</location>
        <location evidence="1">Plasmodesma</location>
    </subcellularLocation>
    <text evidence="1">(Microbial infection) May be present in virus replication complexes (VRCs) of tobamovirus infected cells.</text>
</comment>
<comment type="miscellaneous">
    <text evidence="2">The basic functional RuBisCO is composed of a large chain homodimer in a 'head-to-tail' conformation. In form I RuBisCO this homodimer is arranged in a barrel-like tetramer with the small subunits forming a tetrameric 'cap' on each end of the 'barrel'.</text>
</comment>
<comment type="similarity">
    <text evidence="2">Belongs to the RuBisCO small chain family.</text>
</comment>
<gene>
    <name evidence="2" type="primary">RBCS2</name>
    <name evidence="3" type="synonym">RBCS-2A</name>
</gene>
<keyword id="KW-0051">Antiviral defense</keyword>
<keyword id="KW-0113">Calvin cycle</keyword>
<keyword id="KW-0120">Carbon dioxide fixation</keyword>
<keyword id="KW-0965">Cell junction</keyword>
<keyword id="KW-0150">Chloroplast</keyword>
<keyword id="KW-0945">Host-virus interaction</keyword>
<keyword id="KW-0601">Photorespiration</keyword>
<keyword id="KW-0602">Photosynthesis</keyword>
<keyword id="KW-0934">Plastid</keyword>
<keyword id="KW-1185">Reference proteome</keyword>
<keyword id="KW-0809">Transit peptide</keyword>
<organism>
    <name type="scientific">Solanum lycopersicum</name>
    <name type="common">Tomato</name>
    <name type="synonym">Lycopersicon esculentum</name>
    <dbReference type="NCBI Taxonomy" id="4081"/>
    <lineage>
        <taxon>Eukaryota</taxon>
        <taxon>Viridiplantae</taxon>
        <taxon>Streptophyta</taxon>
        <taxon>Embryophyta</taxon>
        <taxon>Tracheophyta</taxon>
        <taxon>Spermatophyta</taxon>
        <taxon>Magnoliopsida</taxon>
        <taxon>eudicotyledons</taxon>
        <taxon>Gunneridae</taxon>
        <taxon>Pentapetalae</taxon>
        <taxon>asterids</taxon>
        <taxon>lamiids</taxon>
        <taxon>Solanales</taxon>
        <taxon>Solanaceae</taxon>
        <taxon>Solanoideae</taxon>
        <taxon>Solaneae</taxon>
        <taxon>Solanum</taxon>
        <taxon>Solanum subgen. Lycopersicon</taxon>
    </lineage>
</organism>
<dbReference type="EMBL" id="M15236">
    <property type="protein sequence ID" value="AAA34192.1"/>
    <property type="molecule type" value="mRNA"/>
</dbReference>
<dbReference type="EMBL" id="M13543">
    <property type="protein sequence ID" value="AAA34189.1"/>
    <property type="molecule type" value="mRNA"/>
</dbReference>
<dbReference type="EMBL" id="X05983">
    <property type="protein sequence ID" value="CAA29401.2"/>
    <property type="molecule type" value="Genomic_DNA"/>
</dbReference>
<dbReference type="EMBL" id="X66069">
    <property type="protein sequence ID" value="CAA46869.1"/>
    <property type="molecule type" value="Genomic_DNA"/>
</dbReference>
<dbReference type="PIR" id="S02363">
    <property type="entry name" value="RKTOS2"/>
</dbReference>
<dbReference type="RefSeq" id="NP_001295873.1">
    <property type="nucleotide sequence ID" value="NM_001308944.1"/>
</dbReference>
<dbReference type="SMR" id="P07179"/>
<dbReference type="FunCoup" id="P07179">
    <property type="interactions" value="1438"/>
</dbReference>
<dbReference type="STRING" id="4081.P07179"/>
<dbReference type="PaxDb" id="4081-Solyc03g034220.2.1"/>
<dbReference type="EnsemblPlants" id="Solyc03g034220.3.1">
    <property type="protein sequence ID" value="Solyc03g034220.3.1"/>
    <property type="gene ID" value="Solyc03g034220.3"/>
</dbReference>
<dbReference type="GeneID" id="543974"/>
<dbReference type="Gramene" id="Solyc03g034220.3.1">
    <property type="protein sequence ID" value="Solyc03g034220.3.1"/>
    <property type="gene ID" value="Solyc03g034220.3"/>
</dbReference>
<dbReference type="KEGG" id="sly:543974"/>
<dbReference type="eggNOG" id="ENOG502QT0M">
    <property type="taxonomic scope" value="Eukaryota"/>
</dbReference>
<dbReference type="HOGENOM" id="CLU_098114_1_0_1"/>
<dbReference type="InParanoid" id="P07179"/>
<dbReference type="OMA" id="RKNWVPC"/>
<dbReference type="OrthoDB" id="2013936at2759"/>
<dbReference type="PhylomeDB" id="P07179"/>
<dbReference type="Proteomes" id="UP000004994">
    <property type="component" value="Chromosome 3"/>
</dbReference>
<dbReference type="GO" id="GO:0009507">
    <property type="term" value="C:chloroplast"/>
    <property type="evidence" value="ECO:0007669"/>
    <property type="project" value="UniProtKB-SubCell"/>
</dbReference>
<dbReference type="GO" id="GO:0009506">
    <property type="term" value="C:plasmodesma"/>
    <property type="evidence" value="ECO:0007669"/>
    <property type="project" value="UniProtKB-SubCell"/>
</dbReference>
<dbReference type="GO" id="GO:0016984">
    <property type="term" value="F:ribulose-bisphosphate carboxylase activity"/>
    <property type="evidence" value="ECO:0007669"/>
    <property type="project" value="UniProtKB-UniRule"/>
</dbReference>
<dbReference type="GO" id="GO:0051607">
    <property type="term" value="P:defense response to virus"/>
    <property type="evidence" value="ECO:0007669"/>
    <property type="project" value="UniProtKB-KW"/>
</dbReference>
<dbReference type="GO" id="GO:0009853">
    <property type="term" value="P:photorespiration"/>
    <property type="evidence" value="ECO:0007669"/>
    <property type="project" value="UniProtKB-KW"/>
</dbReference>
<dbReference type="GO" id="GO:0019253">
    <property type="term" value="P:reductive pentose-phosphate cycle"/>
    <property type="evidence" value="ECO:0007669"/>
    <property type="project" value="UniProtKB-UniRule"/>
</dbReference>
<dbReference type="CDD" id="cd03527">
    <property type="entry name" value="RuBisCO_small"/>
    <property type="match status" value="1"/>
</dbReference>
<dbReference type="FunFam" id="3.30.190.10:FF:000001">
    <property type="entry name" value="Ribulose bisphosphate carboxylase small chain, chloroplastic"/>
    <property type="match status" value="1"/>
</dbReference>
<dbReference type="Gene3D" id="3.30.190.10">
    <property type="entry name" value="Ribulose bisphosphate carboxylase, small subunit"/>
    <property type="match status" value="1"/>
</dbReference>
<dbReference type="HAMAP" id="MF_00859">
    <property type="entry name" value="RuBisCO_S_bact"/>
    <property type="match status" value="1"/>
</dbReference>
<dbReference type="InterPro" id="IPR024681">
    <property type="entry name" value="RuBisCO_ssu"/>
</dbReference>
<dbReference type="InterPro" id="IPR000894">
    <property type="entry name" value="RuBisCO_ssu_dom"/>
</dbReference>
<dbReference type="InterPro" id="IPR024680">
    <property type="entry name" value="RuBisCO_ssu_N"/>
</dbReference>
<dbReference type="InterPro" id="IPR036385">
    <property type="entry name" value="RuBisCO_ssu_sf"/>
</dbReference>
<dbReference type="PANTHER" id="PTHR31262">
    <property type="entry name" value="RIBULOSE BISPHOSPHATE CARBOXYLASE SMALL CHAIN 1, CHLOROPLASTIC"/>
    <property type="match status" value="1"/>
</dbReference>
<dbReference type="PANTHER" id="PTHR31262:SF10">
    <property type="entry name" value="RIBULOSE BISPHOSPHATE CARBOXYLASE SMALL SUBUNIT 1A, CHLOROPLASTIC-RELATED"/>
    <property type="match status" value="1"/>
</dbReference>
<dbReference type="Pfam" id="PF12338">
    <property type="entry name" value="RbcS"/>
    <property type="match status" value="1"/>
</dbReference>
<dbReference type="Pfam" id="PF00101">
    <property type="entry name" value="RuBisCO_small"/>
    <property type="match status" value="1"/>
</dbReference>
<dbReference type="PRINTS" id="PR00152">
    <property type="entry name" value="RUBISCOSMALL"/>
</dbReference>
<dbReference type="SMART" id="SM00961">
    <property type="entry name" value="RuBisCO_small"/>
    <property type="match status" value="1"/>
</dbReference>
<dbReference type="SUPFAM" id="SSF55239">
    <property type="entry name" value="RuBisCO, small subunit"/>
    <property type="match status" value="1"/>
</dbReference>
<proteinExistence type="evidence at transcript level"/>
<evidence type="ECO:0000250" key="1">
    <source>
        <dbReference type="UniProtKB" id="A0A0S4IJL0"/>
    </source>
</evidence>
<evidence type="ECO:0000255" key="2">
    <source>
        <dbReference type="HAMAP-Rule" id="MF_00860"/>
    </source>
</evidence>
<evidence type="ECO:0000303" key="3">
    <source>
    </source>
</evidence>
<evidence type="ECO:0000303" key="4">
    <source>
    </source>
</evidence>
<evidence type="ECO:0000305" key="5"/>
<accession>P07179</accession>
<name>RBS2_SOLLC</name>
<protein>
    <recommendedName>
        <fullName evidence="2">Ribulose bisphosphate carboxylase small subunit, chloroplastic 2</fullName>
        <shortName evidence="2">RuBisCO small subunit 2</shortName>
    </recommendedName>
    <alternativeName>
        <fullName evidence="4">LESS 5</fullName>
    </alternativeName>
    <alternativeName>
        <fullName evidence="3">Ribulose bisphosphate carboxylase small subunit 2A, chloroplastic</fullName>
        <shortName evidence="3">RuBisCO small subunit 2A</shortName>
    </alternativeName>
</protein>
<sequence length="180" mass="20278">MASSVISSAAVATRSNVTQASMVAPFTGLKSSATFPVTKKQNLDITSIASNGGRVSCMQVWPPINMKKYETLSYLPDLSDEQLLSEIEYLLKNGWVPCLEFETEHGFVYRENNKSPGYYDGRYWTMWKLPMFGCTDATQVLAEVQEAKKAYPQAWVRIIGFDNVRQVQCISFIAYKPEGY</sequence>